<name>ALBA_PYRCJ</name>
<feature type="chain" id="PRO_1000065263" description="DNA/RNA-binding protein Alba">
    <location>
        <begin position="1"/>
        <end position="92"/>
    </location>
</feature>
<feature type="modified residue" description="N6-acetyllysine" evidence="1">
    <location>
        <position position="11"/>
    </location>
</feature>
<dbReference type="EMBL" id="CP000561">
    <property type="protein sequence ID" value="ABO08372.1"/>
    <property type="molecule type" value="Genomic_DNA"/>
</dbReference>
<dbReference type="RefSeq" id="WP_011849630.1">
    <property type="nucleotide sequence ID" value="NC_009073.1"/>
</dbReference>
<dbReference type="SMR" id="A3MUQ5"/>
<dbReference type="STRING" id="410359.Pcal_0947"/>
<dbReference type="GeneID" id="4909979"/>
<dbReference type="KEGG" id="pcl:Pcal_0947"/>
<dbReference type="eggNOG" id="arCOG01753">
    <property type="taxonomic scope" value="Archaea"/>
</dbReference>
<dbReference type="HOGENOM" id="CLU_110989_1_0_2"/>
<dbReference type="OrthoDB" id="10360at2157"/>
<dbReference type="Proteomes" id="UP000001431">
    <property type="component" value="Chromosome"/>
</dbReference>
<dbReference type="GO" id="GO:0005694">
    <property type="term" value="C:chromosome"/>
    <property type="evidence" value="ECO:0007669"/>
    <property type="project" value="UniProtKB-SubCell"/>
</dbReference>
<dbReference type="GO" id="GO:0005737">
    <property type="term" value="C:cytoplasm"/>
    <property type="evidence" value="ECO:0007669"/>
    <property type="project" value="UniProtKB-SubCell"/>
</dbReference>
<dbReference type="GO" id="GO:0003690">
    <property type="term" value="F:double-stranded DNA binding"/>
    <property type="evidence" value="ECO:0007669"/>
    <property type="project" value="UniProtKB-UniRule"/>
</dbReference>
<dbReference type="GO" id="GO:0003723">
    <property type="term" value="F:RNA binding"/>
    <property type="evidence" value="ECO:0007669"/>
    <property type="project" value="InterPro"/>
</dbReference>
<dbReference type="GO" id="GO:0030261">
    <property type="term" value="P:chromosome condensation"/>
    <property type="evidence" value="ECO:0007669"/>
    <property type="project" value="UniProtKB-KW"/>
</dbReference>
<dbReference type="Gene3D" id="3.30.110.20">
    <property type="entry name" value="Alba-like domain"/>
    <property type="match status" value="1"/>
</dbReference>
<dbReference type="HAMAP" id="MF_01122">
    <property type="entry name" value="AlbA"/>
    <property type="match status" value="1"/>
</dbReference>
<dbReference type="InterPro" id="IPR036882">
    <property type="entry name" value="Alba-like_dom_sf"/>
</dbReference>
<dbReference type="InterPro" id="IPR013795">
    <property type="entry name" value="DNA/RNA-bd_Alba"/>
</dbReference>
<dbReference type="InterPro" id="IPR002775">
    <property type="entry name" value="DNA/RNA-bd_Alba-like"/>
</dbReference>
<dbReference type="NCBIfam" id="TIGR00285">
    <property type="entry name" value="DNA-binding protein Alba"/>
    <property type="match status" value="1"/>
</dbReference>
<dbReference type="NCBIfam" id="NF003088">
    <property type="entry name" value="PRK04015.1"/>
    <property type="match status" value="1"/>
</dbReference>
<dbReference type="Pfam" id="PF01918">
    <property type="entry name" value="Alba"/>
    <property type="match status" value="1"/>
</dbReference>
<dbReference type="PIRSF" id="PIRSF028732">
    <property type="entry name" value="Alba"/>
    <property type="match status" value="1"/>
</dbReference>
<dbReference type="SUPFAM" id="SSF82704">
    <property type="entry name" value="AlbA-like"/>
    <property type="match status" value="1"/>
</dbReference>
<sequence length="92" mass="9883">MATEQTILVGKKPTTNYVIATVMAFNAGIKRVVLKARGAAISKAVSTAVMVRDRFLPGKVQIRDVKLLSDKVQGQGGRERTVAAVEIVLEMA</sequence>
<proteinExistence type="inferred from homology"/>
<evidence type="ECO:0000255" key="1">
    <source>
        <dbReference type="HAMAP-Rule" id="MF_01122"/>
    </source>
</evidence>
<accession>A3MUQ5</accession>
<reference key="1">
    <citation type="submission" date="2007-02" db="EMBL/GenBank/DDBJ databases">
        <title>Complete sequence of Pyrobaculum calidifontis JCM 11548.</title>
        <authorList>
            <consortium name="US DOE Joint Genome Institute"/>
            <person name="Copeland A."/>
            <person name="Lucas S."/>
            <person name="Lapidus A."/>
            <person name="Barry K."/>
            <person name="Glavina del Rio T."/>
            <person name="Dalin E."/>
            <person name="Tice H."/>
            <person name="Pitluck S."/>
            <person name="Chain P."/>
            <person name="Malfatti S."/>
            <person name="Shin M."/>
            <person name="Vergez L."/>
            <person name="Schmutz J."/>
            <person name="Larimer F."/>
            <person name="Land M."/>
            <person name="Hauser L."/>
            <person name="Kyrpides N."/>
            <person name="Mikhailova N."/>
            <person name="Cozen A.E."/>
            <person name="Fitz-Gibbon S.T."/>
            <person name="House C.H."/>
            <person name="Saltikov C."/>
            <person name="Lowe T.M."/>
            <person name="Richardson P."/>
        </authorList>
    </citation>
    <scope>NUCLEOTIDE SEQUENCE [LARGE SCALE GENOMIC DNA]</scope>
    <source>
        <strain>DSM 21063 / JCM 11548 / VA1</strain>
    </source>
</reference>
<comment type="function">
    <text evidence="1">Binds double-stranded DNA tightly but without sequence specificity. Involved in DNA compaction.</text>
</comment>
<comment type="subcellular location">
    <subcellularLocation>
        <location evidence="1">Cytoplasm</location>
    </subcellularLocation>
    <subcellularLocation>
        <location evidence="1">Chromosome</location>
    </subcellularLocation>
</comment>
<comment type="PTM">
    <text evidence="1">Acetylated. Acetylation at Lys-11 decreases DNA-binding affinity.</text>
</comment>
<comment type="similarity">
    <text evidence="1">Belongs to the histone-like Alba family.</text>
</comment>
<organism>
    <name type="scientific">Pyrobaculum calidifontis (strain DSM 21063 / JCM 11548 / VA1)</name>
    <dbReference type="NCBI Taxonomy" id="410359"/>
    <lineage>
        <taxon>Archaea</taxon>
        <taxon>Thermoproteota</taxon>
        <taxon>Thermoprotei</taxon>
        <taxon>Thermoproteales</taxon>
        <taxon>Thermoproteaceae</taxon>
        <taxon>Pyrobaculum</taxon>
    </lineage>
</organism>
<protein>
    <recommendedName>
        <fullName evidence="1">DNA/RNA-binding protein Alba</fullName>
    </recommendedName>
</protein>
<keyword id="KW-0007">Acetylation</keyword>
<keyword id="KW-0158">Chromosome</keyword>
<keyword id="KW-0963">Cytoplasm</keyword>
<keyword id="KW-0226">DNA condensation</keyword>
<keyword id="KW-0238">DNA-binding</keyword>
<gene>
    <name evidence="1" type="primary">albA</name>
    <name type="ordered locus">Pcal_0947</name>
</gene>